<protein>
    <recommendedName>
        <fullName evidence="1">Acetyl-coenzyme A carboxylase carboxyl transferase subunit beta</fullName>
        <shortName evidence="1">ACCase subunit beta</shortName>
        <shortName evidence="1">Acetyl-CoA carboxylase carboxyltransferase subunit beta</shortName>
        <ecNumber evidence="1">2.1.3.15</ecNumber>
    </recommendedName>
</protein>
<dbReference type="EC" id="2.1.3.15" evidence="1"/>
<dbReference type="EMBL" id="CP001349">
    <property type="protein sequence ID" value="ACL56612.1"/>
    <property type="molecule type" value="Genomic_DNA"/>
</dbReference>
<dbReference type="RefSeq" id="WP_015928306.1">
    <property type="nucleotide sequence ID" value="NC_011894.1"/>
</dbReference>
<dbReference type="SMR" id="B8IPW2"/>
<dbReference type="STRING" id="460265.Mnod_1622"/>
<dbReference type="KEGG" id="mno:Mnod_1622"/>
<dbReference type="eggNOG" id="COG0777">
    <property type="taxonomic scope" value="Bacteria"/>
</dbReference>
<dbReference type="HOGENOM" id="CLU_015486_1_0_5"/>
<dbReference type="OrthoDB" id="9772975at2"/>
<dbReference type="UniPathway" id="UPA00655">
    <property type="reaction ID" value="UER00711"/>
</dbReference>
<dbReference type="Proteomes" id="UP000008207">
    <property type="component" value="Chromosome"/>
</dbReference>
<dbReference type="GO" id="GO:0009329">
    <property type="term" value="C:acetate CoA-transferase complex"/>
    <property type="evidence" value="ECO:0007669"/>
    <property type="project" value="TreeGrafter"/>
</dbReference>
<dbReference type="GO" id="GO:0003989">
    <property type="term" value="F:acetyl-CoA carboxylase activity"/>
    <property type="evidence" value="ECO:0007669"/>
    <property type="project" value="InterPro"/>
</dbReference>
<dbReference type="GO" id="GO:0005524">
    <property type="term" value="F:ATP binding"/>
    <property type="evidence" value="ECO:0007669"/>
    <property type="project" value="UniProtKB-KW"/>
</dbReference>
<dbReference type="GO" id="GO:0016743">
    <property type="term" value="F:carboxyl- or carbamoyltransferase activity"/>
    <property type="evidence" value="ECO:0007669"/>
    <property type="project" value="UniProtKB-UniRule"/>
</dbReference>
<dbReference type="GO" id="GO:0006633">
    <property type="term" value="P:fatty acid biosynthetic process"/>
    <property type="evidence" value="ECO:0007669"/>
    <property type="project" value="UniProtKB-KW"/>
</dbReference>
<dbReference type="GO" id="GO:2001295">
    <property type="term" value="P:malonyl-CoA biosynthetic process"/>
    <property type="evidence" value="ECO:0007669"/>
    <property type="project" value="UniProtKB-UniRule"/>
</dbReference>
<dbReference type="Gene3D" id="3.90.226.10">
    <property type="entry name" value="2-enoyl-CoA Hydratase, Chain A, domain 1"/>
    <property type="match status" value="1"/>
</dbReference>
<dbReference type="HAMAP" id="MF_01395">
    <property type="entry name" value="AcetylCoA_CT_beta"/>
    <property type="match status" value="1"/>
</dbReference>
<dbReference type="InterPro" id="IPR034733">
    <property type="entry name" value="AcCoA_carboxyl_beta"/>
</dbReference>
<dbReference type="InterPro" id="IPR000438">
    <property type="entry name" value="Acetyl_CoA_COase_Trfase_b_su"/>
</dbReference>
<dbReference type="InterPro" id="IPR029045">
    <property type="entry name" value="ClpP/crotonase-like_dom_sf"/>
</dbReference>
<dbReference type="InterPro" id="IPR011762">
    <property type="entry name" value="COA_CT_N"/>
</dbReference>
<dbReference type="NCBIfam" id="TIGR00515">
    <property type="entry name" value="accD"/>
    <property type="match status" value="1"/>
</dbReference>
<dbReference type="PANTHER" id="PTHR42995">
    <property type="entry name" value="ACETYL-COENZYME A CARBOXYLASE CARBOXYL TRANSFERASE SUBUNIT BETA, CHLOROPLASTIC"/>
    <property type="match status" value="1"/>
</dbReference>
<dbReference type="PANTHER" id="PTHR42995:SF5">
    <property type="entry name" value="ACETYL-COENZYME A CARBOXYLASE CARBOXYL TRANSFERASE SUBUNIT BETA, CHLOROPLASTIC"/>
    <property type="match status" value="1"/>
</dbReference>
<dbReference type="Pfam" id="PF01039">
    <property type="entry name" value="Carboxyl_trans"/>
    <property type="match status" value="1"/>
</dbReference>
<dbReference type="PRINTS" id="PR01070">
    <property type="entry name" value="ACCCTRFRASEB"/>
</dbReference>
<dbReference type="SUPFAM" id="SSF52096">
    <property type="entry name" value="ClpP/crotonase"/>
    <property type="match status" value="1"/>
</dbReference>
<dbReference type="PROSITE" id="PS50980">
    <property type="entry name" value="COA_CT_NTER"/>
    <property type="match status" value="1"/>
</dbReference>
<accession>B8IPW2</accession>
<keyword id="KW-0067">ATP-binding</keyword>
<keyword id="KW-0963">Cytoplasm</keyword>
<keyword id="KW-0275">Fatty acid biosynthesis</keyword>
<keyword id="KW-0276">Fatty acid metabolism</keyword>
<keyword id="KW-0444">Lipid biosynthesis</keyword>
<keyword id="KW-0443">Lipid metabolism</keyword>
<keyword id="KW-0547">Nucleotide-binding</keyword>
<keyword id="KW-1185">Reference proteome</keyword>
<keyword id="KW-0808">Transferase</keyword>
<gene>
    <name evidence="1" type="primary">accD</name>
    <name type="ordered locus">Mnod_1622</name>
</gene>
<comment type="function">
    <text evidence="1">Component of the acetyl coenzyme A carboxylase (ACC) complex. Biotin carboxylase (BC) catalyzes the carboxylation of biotin on its carrier protein (BCCP) and then the CO(2) group is transferred by the transcarboxylase to acetyl-CoA to form malonyl-CoA.</text>
</comment>
<comment type="catalytic activity">
    <reaction evidence="1">
        <text>N(6)-carboxybiotinyl-L-lysyl-[protein] + acetyl-CoA = N(6)-biotinyl-L-lysyl-[protein] + malonyl-CoA</text>
        <dbReference type="Rhea" id="RHEA:54728"/>
        <dbReference type="Rhea" id="RHEA-COMP:10505"/>
        <dbReference type="Rhea" id="RHEA-COMP:10506"/>
        <dbReference type="ChEBI" id="CHEBI:57288"/>
        <dbReference type="ChEBI" id="CHEBI:57384"/>
        <dbReference type="ChEBI" id="CHEBI:83144"/>
        <dbReference type="ChEBI" id="CHEBI:83145"/>
        <dbReference type="EC" id="2.1.3.15"/>
    </reaction>
</comment>
<comment type="pathway">
    <text evidence="1">Lipid metabolism; malonyl-CoA biosynthesis; malonyl-CoA from acetyl-CoA: step 1/1.</text>
</comment>
<comment type="subunit">
    <text evidence="1">Acetyl-CoA carboxylase is a heterohexamer composed of biotin carboxyl carrier protein (AccB), biotin carboxylase (AccC) and two subunits each of ACCase subunit alpha (AccA) and ACCase subunit beta (AccD).</text>
</comment>
<comment type="subcellular location">
    <subcellularLocation>
        <location evidence="1">Cytoplasm</location>
    </subcellularLocation>
</comment>
<comment type="similarity">
    <text evidence="1">Belongs to the AccD/PCCB family.</text>
</comment>
<evidence type="ECO:0000255" key="1">
    <source>
        <dbReference type="HAMAP-Rule" id="MF_01395"/>
    </source>
</evidence>
<evidence type="ECO:0000255" key="2">
    <source>
        <dbReference type="PROSITE-ProRule" id="PRU01136"/>
    </source>
</evidence>
<reference key="1">
    <citation type="submission" date="2009-01" db="EMBL/GenBank/DDBJ databases">
        <title>Complete sequence of chromosome of Methylobacterium nodulans ORS 2060.</title>
        <authorList>
            <consortium name="US DOE Joint Genome Institute"/>
            <person name="Lucas S."/>
            <person name="Copeland A."/>
            <person name="Lapidus A."/>
            <person name="Glavina del Rio T."/>
            <person name="Dalin E."/>
            <person name="Tice H."/>
            <person name="Bruce D."/>
            <person name="Goodwin L."/>
            <person name="Pitluck S."/>
            <person name="Sims D."/>
            <person name="Brettin T."/>
            <person name="Detter J.C."/>
            <person name="Han C."/>
            <person name="Larimer F."/>
            <person name="Land M."/>
            <person name="Hauser L."/>
            <person name="Kyrpides N."/>
            <person name="Ivanova N."/>
            <person name="Marx C.J."/>
            <person name="Richardson P."/>
        </authorList>
    </citation>
    <scope>NUCLEOTIDE SEQUENCE [LARGE SCALE GENOMIC DNA]</scope>
    <source>
        <strain>LMG 21967 / CNCM I-2342 / ORS 2060</strain>
    </source>
</reference>
<feature type="chain" id="PRO_0000389797" description="Acetyl-coenzyme A carboxylase carboxyl transferase subunit beta">
    <location>
        <begin position="1"/>
        <end position="301"/>
    </location>
</feature>
<feature type="domain" description="CoA carboxyltransferase N-terminal" evidence="2">
    <location>
        <begin position="29"/>
        <end position="298"/>
    </location>
</feature>
<proteinExistence type="inferred from homology"/>
<organism>
    <name type="scientific">Methylobacterium nodulans (strain LMG 21967 / CNCM I-2342 / ORS 2060)</name>
    <dbReference type="NCBI Taxonomy" id="460265"/>
    <lineage>
        <taxon>Bacteria</taxon>
        <taxon>Pseudomonadati</taxon>
        <taxon>Pseudomonadota</taxon>
        <taxon>Alphaproteobacteria</taxon>
        <taxon>Hyphomicrobiales</taxon>
        <taxon>Methylobacteriaceae</taxon>
        <taxon>Methylobacterium</taxon>
    </lineage>
</organism>
<sequence>MKVETMNWISEVVRPRIKTLFKRETPENLWVKCPETGQMVFHKEVEANDYVIPGSEHHLRMTAQQRLKMMFDQGTWLDVPLPEVPVDPLKFRDEKRYVDRLKDARAKTGMMDAFKVGFGRVGGLPMTLAVQDFGFMGGSLGMAAGEAFVRGAETALDKRTPYVLFAASGGARMQEGILSLMQMPRTTVAVRRLNQARLPYLVVMTNPTTGGVTASYAMLGDIHLAEPGALIGFAGPRVIEQTIREKLPDGFQRSEYLREHGMIDQVVHRRDLKATIARLCGLLMQAPAAEPAEEEAEPLPA</sequence>
<name>ACCD_METNO</name>